<feature type="chain" id="PRO_0000338909" description="Translation initiation factor IF-1">
    <location>
        <begin position="1"/>
        <end position="73"/>
    </location>
</feature>
<feature type="domain" description="S1-like" evidence="1">
    <location>
        <begin position="1"/>
        <end position="73"/>
    </location>
</feature>
<evidence type="ECO:0000255" key="1">
    <source>
        <dbReference type="HAMAP-Rule" id="MF_00075"/>
    </source>
</evidence>
<accession>A5USG7</accession>
<reference key="1">
    <citation type="submission" date="2007-04" db="EMBL/GenBank/DDBJ databases">
        <title>Complete sequence of Roseiflexus sp. RS-1.</title>
        <authorList>
            <consortium name="US DOE Joint Genome Institute"/>
            <person name="Copeland A."/>
            <person name="Lucas S."/>
            <person name="Lapidus A."/>
            <person name="Barry K."/>
            <person name="Detter J.C."/>
            <person name="Glavina del Rio T."/>
            <person name="Hammon N."/>
            <person name="Israni S."/>
            <person name="Dalin E."/>
            <person name="Tice H."/>
            <person name="Pitluck S."/>
            <person name="Chertkov O."/>
            <person name="Brettin T."/>
            <person name="Bruce D."/>
            <person name="Han C."/>
            <person name="Schmutz J."/>
            <person name="Larimer F."/>
            <person name="Land M."/>
            <person name="Hauser L."/>
            <person name="Kyrpides N."/>
            <person name="Mikhailova N."/>
            <person name="Bryant D.A."/>
            <person name="Richardson P."/>
        </authorList>
    </citation>
    <scope>NUCLEOTIDE SEQUENCE [LARGE SCALE GENOMIC DNA]</scope>
    <source>
        <strain>RS-1</strain>
    </source>
</reference>
<organism>
    <name type="scientific">Roseiflexus sp. (strain RS-1)</name>
    <dbReference type="NCBI Taxonomy" id="357808"/>
    <lineage>
        <taxon>Bacteria</taxon>
        <taxon>Bacillati</taxon>
        <taxon>Chloroflexota</taxon>
        <taxon>Chloroflexia</taxon>
        <taxon>Chloroflexales</taxon>
        <taxon>Roseiflexineae</taxon>
        <taxon>Roseiflexaceae</taxon>
        <taxon>Roseiflexus</taxon>
    </lineage>
</organism>
<comment type="function">
    <text evidence="1">One of the essential components for the initiation of protein synthesis. Stabilizes the binding of IF-2 and IF-3 on the 30S subunit to which N-formylmethionyl-tRNA(fMet) subsequently binds. Helps modulate mRNA selection, yielding the 30S pre-initiation complex (PIC). Upon addition of the 50S ribosomal subunit IF-1, IF-2 and IF-3 are released leaving the mature 70S translation initiation complex.</text>
</comment>
<comment type="subunit">
    <text evidence="1">Component of the 30S ribosomal translation pre-initiation complex which assembles on the 30S ribosome in the order IF-2 and IF-3, IF-1 and N-formylmethionyl-tRNA(fMet); mRNA recruitment can occur at any time during PIC assembly.</text>
</comment>
<comment type="subcellular location">
    <subcellularLocation>
        <location evidence="1">Cytoplasm</location>
    </subcellularLocation>
</comment>
<comment type="similarity">
    <text evidence="1">Belongs to the IF-1 family.</text>
</comment>
<name>IF1_ROSS1</name>
<keyword id="KW-0963">Cytoplasm</keyword>
<keyword id="KW-0396">Initiation factor</keyword>
<keyword id="KW-0648">Protein biosynthesis</keyword>
<keyword id="KW-0694">RNA-binding</keyword>
<keyword id="KW-0699">rRNA-binding</keyword>
<proteinExistence type="inferred from homology"/>
<gene>
    <name evidence="1" type="primary">infA</name>
    <name type="ordered locus">RoseRS_1163</name>
</gene>
<dbReference type="EMBL" id="CP000686">
    <property type="protein sequence ID" value="ABQ89570.1"/>
    <property type="molecule type" value="Genomic_DNA"/>
</dbReference>
<dbReference type="RefSeq" id="WP_011955923.1">
    <property type="nucleotide sequence ID" value="NC_009523.1"/>
</dbReference>
<dbReference type="SMR" id="A5USG7"/>
<dbReference type="STRING" id="357808.RoseRS_1163"/>
<dbReference type="KEGG" id="rrs:RoseRS_1163"/>
<dbReference type="eggNOG" id="COG0361">
    <property type="taxonomic scope" value="Bacteria"/>
</dbReference>
<dbReference type="HOGENOM" id="CLU_151267_1_0_0"/>
<dbReference type="OrthoDB" id="9803250at2"/>
<dbReference type="Proteomes" id="UP000006554">
    <property type="component" value="Chromosome"/>
</dbReference>
<dbReference type="GO" id="GO:0005829">
    <property type="term" value="C:cytosol"/>
    <property type="evidence" value="ECO:0007669"/>
    <property type="project" value="TreeGrafter"/>
</dbReference>
<dbReference type="GO" id="GO:0043022">
    <property type="term" value="F:ribosome binding"/>
    <property type="evidence" value="ECO:0007669"/>
    <property type="project" value="UniProtKB-UniRule"/>
</dbReference>
<dbReference type="GO" id="GO:0019843">
    <property type="term" value="F:rRNA binding"/>
    <property type="evidence" value="ECO:0007669"/>
    <property type="project" value="UniProtKB-UniRule"/>
</dbReference>
<dbReference type="GO" id="GO:0003743">
    <property type="term" value="F:translation initiation factor activity"/>
    <property type="evidence" value="ECO:0007669"/>
    <property type="project" value="UniProtKB-UniRule"/>
</dbReference>
<dbReference type="CDD" id="cd04451">
    <property type="entry name" value="S1_IF1"/>
    <property type="match status" value="1"/>
</dbReference>
<dbReference type="FunFam" id="2.40.50.140:FF:000002">
    <property type="entry name" value="Translation initiation factor IF-1"/>
    <property type="match status" value="1"/>
</dbReference>
<dbReference type="Gene3D" id="2.40.50.140">
    <property type="entry name" value="Nucleic acid-binding proteins"/>
    <property type="match status" value="1"/>
</dbReference>
<dbReference type="HAMAP" id="MF_00075">
    <property type="entry name" value="IF_1"/>
    <property type="match status" value="1"/>
</dbReference>
<dbReference type="InterPro" id="IPR012340">
    <property type="entry name" value="NA-bd_OB-fold"/>
</dbReference>
<dbReference type="InterPro" id="IPR006196">
    <property type="entry name" value="RNA-binding_domain_S1_IF1"/>
</dbReference>
<dbReference type="InterPro" id="IPR003029">
    <property type="entry name" value="S1_domain"/>
</dbReference>
<dbReference type="InterPro" id="IPR004368">
    <property type="entry name" value="TIF_IF1"/>
</dbReference>
<dbReference type="NCBIfam" id="TIGR00008">
    <property type="entry name" value="infA"/>
    <property type="match status" value="1"/>
</dbReference>
<dbReference type="PANTHER" id="PTHR33370">
    <property type="entry name" value="TRANSLATION INITIATION FACTOR IF-1, CHLOROPLASTIC"/>
    <property type="match status" value="1"/>
</dbReference>
<dbReference type="PANTHER" id="PTHR33370:SF1">
    <property type="entry name" value="TRANSLATION INITIATION FACTOR IF-1, CHLOROPLASTIC"/>
    <property type="match status" value="1"/>
</dbReference>
<dbReference type="Pfam" id="PF01176">
    <property type="entry name" value="eIF-1a"/>
    <property type="match status" value="1"/>
</dbReference>
<dbReference type="SMART" id="SM00316">
    <property type="entry name" value="S1"/>
    <property type="match status" value="1"/>
</dbReference>
<dbReference type="SUPFAM" id="SSF50249">
    <property type="entry name" value="Nucleic acid-binding proteins"/>
    <property type="match status" value="1"/>
</dbReference>
<dbReference type="PROSITE" id="PS50832">
    <property type="entry name" value="S1_IF1_TYPE"/>
    <property type="match status" value="1"/>
</dbReference>
<sequence length="73" mass="8580">MSKKKDVIEMEGTITEPLPNAMFRVKLENGHEVLAHISGRMRMNYIRILKGDRVLVELSPYDLTRGRITYRYK</sequence>
<protein>
    <recommendedName>
        <fullName evidence="1">Translation initiation factor IF-1</fullName>
    </recommendedName>
</protein>